<comment type="function">
    <text evidence="2 3 10 11 12 13 14 15 16 17 18">Deubiquitinating enzyme that regulates the degradation of various proteins by removing ubiquitin moieties, thereby preventing their proteasomal degradation. Stabilizes RNF123, which promotes CDKN1B degradation and contributes to cell proliferation (By similarity). Decreases the levels of ubiquitinated proteins during skeletal muscle formation and acts to repress myogenesis. Modulates transcription of major myofibrillar proteins. Also involved in turnover of endoplasmic-reticulum-associated degradation (ERAD) substrates (PubMed:19465887, PubMed:24356957). Mechanistically, deubiquitinates and thereby stabilizes several E3 ligases involved in the ERAD pathway including SYVN1 or MARCHF6 (PubMed:24356957). Regulates the stability of other E3 ligases including BIRC2/c-IAP1 and BIRC3/c-IAP2 by preventing their ubiquitination (PubMed:21849505). Required for cells to mount an appropriate response to hypoxia by rescuing HIF1A from degradation in a non-catalytic manner and by mediating the deubiquitination of FUNDC1 (PubMed:22128162, PubMed:33978709). Attenuates mitochondrial damage and ferroptosis by targeting and stabilizing NADPH oxidase 4/NOX4 (PubMed:38943386). Negatively regulates TNF-alpha- and IL-1beta-triggered NF-kappa-B activation by hydrolyzing 'Lys-27'- and 'Lys-63'-linked polyubiquitin chains from MAP3K7 (PubMed:31127032). Modulates also the protein level and aggregation of polyQ-expanded huntingtin/HTT through HSP90AA1 (PubMed:33094816).</text>
</comment>
<comment type="catalytic activity">
    <reaction evidence="14 15 17">
        <text>Thiol-dependent hydrolysis of ester, thioester, amide, peptide and isopeptide bonds formed by the C-terminal Gly of ubiquitin (a 76-residue protein attached to proteins as an intracellular targeting signal).</text>
        <dbReference type="EC" id="3.4.19.12"/>
    </reaction>
</comment>
<comment type="subunit">
    <text evidence="1 11 12 16">Interacts with RNF123 (By similarity). Interacts with BIRC2/c-IAP1, BIRC3/c-IAP2 and XIAP/BIRC4. Interacts with HIF1A (via N-terminus). Interacts (via N-terminus) with HSP90AA1; this interaction activates the deubiquitinase activity of USP19 (PubMed:33094816).</text>
</comment>
<comment type="interaction">
    <interactant intactId="EBI-2511895">
        <id>O94966</id>
    </interactant>
    <interactant intactId="EBI-349854">
        <id>P13569</id>
        <label>CFTR</label>
    </interactant>
    <organismsDiffer>false</organismsDiffer>
    <experiments>6</experiments>
</comment>
<comment type="subcellular location">
    <subcellularLocation>
        <location evidence="10 17">Endoplasmic reticulum membrane</location>
        <topology evidence="10">Single-pass membrane protein</topology>
    </subcellularLocation>
    <text evidence="17">Accumulates in the mitochondria-associated ER membrane (MAM) in response to hypoxia.</text>
</comment>
<comment type="alternative products">
    <event type="alternative splicing"/>
    <isoform>
        <id>O94966-1</id>
        <name>1</name>
        <sequence type="displayed"/>
    </isoform>
    <isoform>
        <id>O94966-2</id>
        <name>2</name>
        <sequence type="described" ref="VSP_026708 VSP_026709 VSP_026710 VSP_026711"/>
    </isoform>
    <isoform>
        <id>O94966-3</id>
        <name>3</name>
        <sequence type="described" ref="VSP_026712 VSP_026713"/>
    </isoform>
    <isoform>
        <id>O94966-4</id>
        <name>4</name>
        <sequence type="described" ref="VSP_026708 VSP_045891 VSP_026712 VSP_026713"/>
    </isoform>
    <isoform>
        <id>O94966-5</id>
        <name>5</name>
        <sequence type="described" ref="VSP_026709"/>
    </isoform>
    <isoform>
        <id>O94966-6</id>
        <name>6</name>
        <sequence type="described" ref="VSP_026709 VSP_045891 VSP_026712 VSP_026713"/>
    </isoform>
    <isoform>
        <id>O94966-7</id>
        <name>7</name>
        <sequence type="described" ref="VSP_047057 VSP_026712 VSP_026713"/>
    </isoform>
</comment>
<comment type="domain">
    <text evidence="16">Contains two CS (CHORD and Sgt1) domains, namely CS1 and CS2, in its N-terminus and a catalytic USP domain (USPD).</text>
</comment>
<comment type="similarity">
    <text evidence="21">Belongs to the peptidase C19 family.</text>
</comment>
<comment type="sequence caution" evidence="21">
    <conflict type="erroneous initiation">
        <sequence resource="EMBL-CDS" id="AAI06030"/>
    </conflict>
    <text>Extended N-terminus.</text>
</comment>
<comment type="sequence caution" evidence="21">
    <conflict type="frameshift">
        <sequence resource="EMBL-CDS" id="AAI06030"/>
    </conflict>
</comment>
<comment type="sequence caution" evidence="21">
    <conflict type="erroneous initiation">
        <sequence resource="EMBL-CDS" id="AAI42661"/>
    </conflict>
    <text>Extended N-terminus.</text>
</comment>
<comment type="sequence caution" evidence="21">
    <conflict type="erroneous initiation">
        <sequence resource="EMBL-CDS" id="BAA74914"/>
    </conflict>
    <text>Extended N-terminus.</text>
</comment>
<proteinExistence type="evidence at protein level"/>
<gene>
    <name type="primary">USP19</name>
    <name type="synonym">KIAA0891</name>
    <name type="synonym">ZMYND9</name>
</gene>
<dbReference type="EC" id="3.4.19.12" evidence="14 15 17"/>
<dbReference type="EMBL" id="AB020698">
    <property type="protein sequence ID" value="BAA74914.1"/>
    <property type="status" value="ALT_INIT"/>
    <property type="molecule type" value="mRNA"/>
</dbReference>
<dbReference type="EMBL" id="AK294756">
    <property type="protein sequence ID" value="BAG57894.1"/>
    <property type="molecule type" value="mRNA"/>
</dbReference>
<dbReference type="EMBL" id="AK300425">
    <property type="protein sequence ID" value="BAG62152.1"/>
    <property type="molecule type" value="mRNA"/>
</dbReference>
<dbReference type="EMBL" id="AC135506">
    <property type="status" value="NOT_ANNOTATED_CDS"/>
    <property type="molecule type" value="Genomic_DNA"/>
</dbReference>
<dbReference type="EMBL" id="BC048269">
    <property type="protein sequence ID" value="AAH48269.1"/>
    <property type="molecule type" value="mRNA"/>
</dbReference>
<dbReference type="EMBL" id="BC065909">
    <property type="protein sequence ID" value="AAH65909.1"/>
    <property type="molecule type" value="mRNA"/>
</dbReference>
<dbReference type="EMBL" id="BC082241">
    <property type="protein sequence ID" value="AAH82241.1"/>
    <property type="molecule type" value="mRNA"/>
</dbReference>
<dbReference type="EMBL" id="BC106029">
    <property type="protein sequence ID" value="AAI06030.1"/>
    <property type="status" value="ALT_SEQ"/>
    <property type="molecule type" value="mRNA"/>
</dbReference>
<dbReference type="EMBL" id="BC142660">
    <property type="protein sequence ID" value="AAI42661.1"/>
    <property type="status" value="ALT_INIT"/>
    <property type="molecule type" value="mRNA"/>
</dbReference>
<dbReference type="EMBL" id="BC146752">
    <property type="protein sequence ID" value="AAI46753.1"/>
    <property type="molecule type" value="mRNA"/>
</dbReference>
<dbReference type="CCDS" id="CCDS43090.1">
    <molecule id="O94966-1"/>
</dbReference>
<dbReference type="CCDS" id="CCDS56254.1">
    <molecule id="O94966-5"/>
</dbReference>
<dbReference type="CCDS" id="CCDS56255.1">
    <molecule id="O94966-6"/>
</dbReference>
<dbReference type="CCDS" id="CCDS56256.1">
    <molecule id="O94966-7"/>
</dbReference>
<dbReference type="CCDS" id="CCDS93271.1">
    <molecule id="O94966-4"/>
</dbReference>
<dbReference type="RefSeq" id="NP_001186089.1">
    <molecule id="O94966-5"/>
    <property type="nucleotide sequence ID" value="NM_001199160.2"/>
</dbReference>
<dbReference type="RefSeq" id="NP_001186090.1">
    <molecule id="O94966-6"/>
    <property type="nucleotide sequence ID" value="NM_001199161.2"/>
</dbReference>
<dbReference type="RefSeq" id="NP_001186091.1">
    <molecule id="O94966-7"/>
    <property type="nucleotide sequence ID" value="NM_001199162.2"/>
</dbReference>
<dbReference type="RefSeq" id="NP_001338031.1">
    <molecule id="O94966-4"/>
    <property type="nucleotide sequence ID" value="NM_001351102.2"/>
</dbReference>
<dbReference type="RefSeq" id="NP_001376537.1">
    <molecule id="O94966-3"/>
    <property type="nucleotide sequence ID" value="NM_001389608.1"/>
</dbReference>
<dbReference type="RefSeq" id="NP_001387221.1">
    <molecule id="O94966-6"/>
    <property type="nucleotide sequence ID" value="NM_001400292.1"/>
</dbReference>
<dbReference type="RefSeq" id="NP_006668.1">
    <molecule id="O94966-1"/>
    <property type="nucleotide sequence ID" value="NM_006677.3"/>
</dbReference>
<dbReference type="RefSeq" id="XP_005264888.1">
    <property type="nucleotide sequence ID" value="XM_005264831.2"/>
</dbReference>
<dbReference type="RefSeq" id="XP_016861115.1">
    <property type="nucleotide sequence ID" value="XM_017005626.1"/>
</dbReference>
<dbReference type="RefSeq" id="XP_016861122.1">
    <property type="nucleotide sequence ID" value="XM_017005633.1"/>
</dbReference>
<dbReference type="PDB" id="1WH0">
    <property type="method" value="NMR"/>
    <property type="chains" value="A=273-393"/>
</dbReference>
<dbReference type="PDB" id="4X3G">
    <property type="method" value="X-ray"/>
    <property type="resolution" value="2.34 A"/>
    <property type="chains" value="C/D=461-474"/>
</dbReference>
<dbReference type="PDB" id="6K7W">
    <property type="method" value="NMR"/>
    <property type="chains" value="A=113-204"/>
</dbReference>
<dbReference type="PDB" id="6KHV">
    <property type="method" value="NMR"/>
    <property type="chains" value="A=273-386"/>
</dbReference>
<dbReference type="PDB" id="6KQV">
    <property type="method" value="NMR"/>
    <property type="chains" value="A=679-766"/>
</dbReference>
<dbReference type="PDBsum" id="1WH0"/>
<dbReference type="PDBsum" id="4X3G"/>
<dbReference type="PDBsum" id="6K7W"/>
<dbReference type="PDBsum" id="6KHV"/>
<dbReference type="PDBsum" id="6KQV"/>
<dbReference type="SMR" id="O94966"/>
<dbReference type="BioGRID" id="116078">
    <property type="interactions" value="157"/>
</dbReference>
<dbReference type="FunCoup" id="O94966">
    <property type="interactions" value="1782"/>
</dbReference>
<dbReference type="IntAct" id="O94966">
    <property type="interactions" value="80"/>
</dbReference>
<dbReference type="MINT" id="O94966"/>
<dbReference type="STRING" id="9606.ENSP00000401197"/>
<dbReference type="BindingDB" id="O94966"/>
<dbReference type="ChEMBL" id="CHEMBL4523156"/>
<dbReference type="MEROPS" id="C19.024"/>
<dbReference type="GlyGen" id="O94966">
    <property type="glycosylation" value="4 sites, 1 O-linked glycan (1 site)"/>
</dbReference>
<dbReference type="iPTMnet" id="O94966"/>
<dbReference type="PhosphoSitePlus" id="O94966"/>
<dbReference type="SwissPalm" id="O94966"/>
<dbReference type="BioMuta" id="USP19"/>
<dbReference type="jPOST" id="O94966"/>
<dbReference type="MassIVE" id="O94966"/>
<dbReference type="PaxDb" id="9606-ENSP00000401197"/>
<dbReference type="PeptideAtlas" id="O94966"/>
<dbReference type="ProteomicsDB" id="17063"/>
<dbReference type="ProteomicsDB" id="18276"/>
<dbReference type="ProteomicsDB" id="19884"/>
<dbReference type="ProteomicsDB" id="50583">
    <molecule id="O94966-1"/>
</dbReference>
<dbReference type="ProteomicsDB" id="50584">
    <molecule id="O94966-2"/>
</dbReference>
<dbReference type="ProteomicsDB" id="50585">
    <molecule id="O94966-3"/>
</dbReference>
<dbReference type="ProteomicsDB" id="50586">
    <molecule id="O94966-4"/>
</dbReference>
<dbReference type="Pumba" id="O94966"/>
<dbReference type="Antibodypedia" id="30419">
    <property type="antibodies" value="184 antibodies from 32 providers"/>
</dbReference>
<dbReference type="DNASU" id="10869"/>
<dbReference type="Ensembl" id="ENST00000398888.6">
    <molecule id="O94966-1"/>
    <property type="protein sequence ID" value="ENSP00000381863.2"/>
    <property type="gene ID" value="ENSG00000172046.21"/>
</dbReference>
<dbReference type="Ensembl" id="ENST00000398896.6">
    <molecule id="O94966-4"/>
    <property type="protein sequence ID" value="ENSP00000381870.3"/>
    <property type="gene ID" value="ENSG00000172046.21"/>
</dbReference>
<dbReference type="Ensembl" id="ENST00000417901.6">
    <molecule id="O94966-6"/>
    <property type="protein sequence ID" value="ENSP00000395260.1"/>
    <property type="gene ID" value="ENSG00000172046.21"/>
</dbReference>
<dbReference type="Ensembl" id="ENST00000434032.6">
    <molecule id="O94966-5"/>
    <property type="protein sequence ID" value="ENSP00000401197.2"/>
    <property type="gene ID" value="ENSG00000172046.21"/>
</dbReference>
<dbReference type="Ensembl" id="ENST00000453664.5">
    <molecule id="O94966-7"/>
    <property type="protein sequence ID" value="ENSP00000400090.1"/>
    <property type="gene ID" value="ENSG00000172046.21"/>
</dbReference>
<dbReference type="GeneID" id="10869"/>
<dbReference type="KEGG" id="hsa:10869"/>
<dbReference type="MANE-Select" id="ENST00000417901.6">
    <molecule id="O94966-6"/>
    <property type="protein sequence ID" value="ENSP00000395260.1"/>
    <property type="RefSeq nucleotide sequence ID" value="NM_001199161.2"/>
    <property type="RefSeq protein sequence ID" value="NP_001186090.1"/>
</dbReference>
<dbReference type="UCSC" id="uc003cvz.5">
    <molecule id="O94966-1"/>
    <property type="organism name" value="human"/>
</dbReference>
<dbReference type="AGR" id="HGNC:12617"/>
<dbReference type="CTD" id="10869"/>
<dbReference type="DisGeNET" id="10869"/>
<dbReference type="GeneCards" id="USP19"/>
<dbReference type="HGNC" id="HGNC:12617">
    <property type="gene designation" value="USP19"/>
</dbReference>
<dbReference type="HPA" id="ENSG00000172046">
    <property type="expression patterns" value="Low tissue specificity"/>
</dbReference>
<dbReference type="MalaCards" id="USP19"/>
<dbReference type="MIM" id="614471">
    <property type="type" value="gene"/>
</dbReference>
<dbReference type="neXtProt" id="NX_O94966"/>
<dbReference type="OpenTargets" id="ENSG00000172046"/>
<dbReference type="PharmGKB" id="PA37243"/>
<dbReference type="VEuPathDB" id="HostDB:ENSG00000172046"/>
<dbReference type="eggNOG" id="KOG1870">
    <property type="taxonomic scope" value="Eukaryota"/>
</dbReference>
<dbReference type="GeneTree" id="ENSGT00940000159085"/>
<dbReference type="InParanoid" id="O94966"/>
<dbReference type="OMA" id="RIWPQRV"/>
<dbReference type="OrthoDB" id="265776at2759"/>
<dbReference type="PAN-GO" id="O94966">
    <property type="GO annotations" value="1 GO annotation based on evolutionary models"/>
</dbReference>
<dbReference type="PhylomeDB" id="O94966"/>
<dbReference type="TreeFam" id="TF106276"/>
<dbReference type="PathwayCommons" id="O94966"/>
<dbReference type="Reactome" id="R-HSA-5689880">
    <property type="pathway name" value="Ub-specific processing proteases"/>
</dbReference>
<dbReference type="SignaLink" id="O94966"/>
<dbReference type="BioGRID-ORCS" id="10869">
    <property type="hits" value="68 hits in 1170 CRISPR screens"/>
</dbReference>
<dbReference type="ChiTaRS" id="USP19">
    <property type="organism name" value="human"/>
</dbReference>
<dbReference type="EvolutionaryTrace" id="O94966"/>
<dbReference type="GenomeRNAi" id="10869"/>
<dbReference type="Pharos" id="O94966">
    <property type="development level" value="Tbio"/>
</dbReference>
<dbReference type="PRO" id="PR:O94966"/>
<dbReference type="Proteomes" id="UP000005640">
    <property type="component" value="Chromosome 3"/>
</dbReference>
<dbReference type="RNAct" id="O94966">
    <property type="molecule type" value="protein"/>
</dbReference>
<dbReference type="Bgee" id="ENSG00000172046">
    <property type="expression patterns" value="Expressed in gastrocnemius and 183 other cell types or tissues"/>
</dbReference>
<dbReference type="ExpressionAtlas" id="O94966">
    <property type="expression patterns" value="baseline and differential"/>
</dbReference>
<dbReference type="GO" id="GO:0005829">
    <property type="term" value="C:cytosol"/>
    <property type="evidence" value="ECO:0000314"/>
    <property type="project" value="ParkinsonsUK-UCL"/>
</dbReference>
<dbReference type="GO" id="GO:0005789">
    <property type="term" value="C:endoplasmic reticulum membrane"/>
    <property type="evidence" value="ECO:0000314"/>
    <property type="project" value="UniProtKB"/>
</dbReference>
<dbReference type="GO" id="GO:0004843">
    <property type="term" value="F:cysteine-type deubiquitinase activity"/>
    <property type="evidence" value="ECO:0000314"/>
    <property type="project" value="UniProtKB"/>
</dbReference>
<dbReference type="GO" id="GO:0051879">
    <property type="term" value="F:Hsp90 protein binding"/>
    <property type="evidence" value="ECO:0000314"/>
    <property type="project" value="ParkinsonsUK-UCL"/>
</dbReference>
<dbReference type="GO" id="GO:0008270">
    <property type="term" value="F:zinc ion binding"/>
    <property type="evidence" value="ECO:0007669"/>
    <property type="project" value="UniProtKB-KW"/>
</dbReference>
<dbReference type="GO" id="GO:0036503">
    <property type="term" value="P:ERAD pathway"/>
    <property type="evidence" value="ECO:0000314"/>
    <property type="project" value="UniProtKB"/>
</dbReference>
<dbReference type="GO" id="GO:0048642">
    <property type="term" value="P:negative regulation of skeletal muscle tissue development"/>
    <property type="evidence" value="ECO:0000250"/>
    <property type="project" value="UniProtKB"/>
</dbReference>
<dbReference type="GO" id="GO:0090068">
    <property type="term" value="P:positive regulation of cell cycle process"/>
    <property type="evidence" value="ECO:0000250"/>
    <property type="project" value="UniProtKB"/>
</dbReference>
<dbReference type="GO" id="GO:0016579">
    <property type="term" value="P:protein deubiquitination"/>
    <property type="evidence" value="ECO:0000315"/>
    <property type="project" value="ParkinsonsUK-UCL"/>
</dbReference>
<dbReference type="GO" id="GO:0050821">
    <property type="term" value="P:protein stabilization"/>
    <property type="evidence" value="ECO:0000315"/>
    <property type="project" value="ParkinsonsUK-UCL"/>
</dbReference>
<dbReference type="GO" id="GO:1900037">
    <property type="term" value="P:regulation of cellular response to hypoxia"/>
    <property type="evidence" value="ECO:0000315"/>
    <property type="project" value="UniProtKB"/>
</dbReference>
<dbReference type="GO" id="GO:1904292">
    <property type="term" value="P:regulation of ERAD pathway"/>
    <property type="evidence" value="ECO:0000315"/>
    <property type="project" value="ParkinsonsUK-UCL"/>
</dbReference>
<dbReference type="GO" id="GO:0031647">
    <property type="term" value="P:regulation of protein stability"/>
    <property type="evidence" value="ECO:0000250"/>
    <property type="project" value="UniProtKB"/>
</dbReference>
<dbReference type="GO" id="GO:0034976">
    <property type="term" value="P:response to endoplasmic reticulum stress"/>
    <property type="evidence" value="ECO:0000270"/>
    <property type="project" value="UniProtKB"/>
</dbReference>
<dbReference type="CDD" id="cd06466">
    <property type="entry name" value="p23_CS_SGT1_like"/>
    <property type="match status" value="1"/>
</dbReference>
<dbReference type="CDD" id="cd06463">
    <property type="entry name" value="p23_like"/>
    <property type="match status" value="1"/>
</dbReference>
<dbReference type="CDD" id="cd02674">
    <property type="entry name" value="Peptidase_C19R"/>
    <property type="match status" value="1"/>
</dbReference>
<dbReference type="FunFam" id="3.90.70.10:FF:000012">
    <property type="entry name" value="ubiquitin carboxyl-terminal hydrolase 19 isoform X2"/>
    <property type="match status" value="1"/>
</dbReference>
<dbReference type="FunFam" id="3.90.70.10:FF:000020">
    <property type="entry name" value="ubiquitin carboxyl-terminal hydrolase 19 isoform X4"/>
    <property type="match status" value="1"/>
</dbReference>
<dbReference type="FunFam" id="2.60.40.790:FF:000004">
    <property type="entry name" value="ubiquitin carboxyl-terminal hydrolase 19 isoform X9"/>
    <property type="match status" value="1"/>
</dbReference>
<dbReference type="FunFam" id="6.10.140.2220:FF:000004">
    <property type="entry name" value="ubiquitin carboxyl-terminal hydrolase 19 isoform X9"/>
    <property type="match status" value="1"/>
</dbReference>
<dbReference type="Gene3D" id="2.60.40.790">
    <property type="match status" value="2"/>
</dbReference>
<dbReference type="Gene3D" id="6.10.140.2220">
    <property type="match status" value="1"/>
</dbReference>
<dbReference type="Gene3D" id="3.90.70.10">
    <property type="entry name" value="Cysteine proteinases"/>
    <property type="match status" value="2"/>
</dbReference>
<dbReference type="InterPro" id="IPR007052">
    <property type="entry name" value="CS_dom"/>
</dbReference>
<dbReference type="InterPro" id="IPR008978">
    <property type="entry name" value="HSP20-like_chaperone"/>
</dbReference>
<dbReference type="InterPro" id="IPR038765">
    <property type="entry name" value="Papain-like_cys_pep_sf"/>
</dbReference>
<dbReference type="InterPro" id="IPR001394">
    <property type="entry name" value="Peptidase_C19_UCH"/>
</dbReference>
<dbReference type="InterPro" id="IPR050185">
    <property type="entry name" value="Ub_carboxyl-term_hydrolase"/>
</dbReference>
<dbReference type="InterPro" id="IPR018200">
    <property type="entry name" value="USP_CS"/>
</dbReference>
<dbReference type="InterPro" id="IPR028889">
    <property type="entry name" value="USP_dom"/>
</dbReference>
<dbReference type="InterPro" id="IPR002893">
    <property type="entry name" value="Znf_MYND"/>
</dbReference>
<dbReference type="PANTHER" id="PTHR21646">
    <property type="entry name" value="UBIQUITIN CARBOXYL-TERMINAL HYDROLASE"/>
    <property type="match status" value="1"/>
</dbReference>
<dbReference type="PANTHER" id="PTHR21646:SF74">
    <property type="entry name" value="UBIQUITIN CARBOXYL-TERMINAL HYDROLASE 19"/>
    <property type="match status" value="1"/>
</dbReference>
<dbReference type="Pfam" id="PF04969">
    <property type="entry name" value="CS"/>
    <property type="match status" value="2"/>
</dbReference>
<dbReference type="Pfam" id="PF00443">
    <property type="entry name" value="UCH"/>
    <property type="match status" value="1"/>
</dbReference>
<dbReference type="Pfam" id="PF16602">
    <property type="entry name" value="USP19_linker"/>
    <property type="match status" value="1"/>
</dbReference>
<dbReference type="Pfam" id="PF01753">
    <property type="entry name" value="zf-MYND"/>
    <property type="match status" value="1"/>
</dbReference>
<dbReference type="PRINTS" id="PR02045">
    <property type="entry name" value="F138DOMAIN"/>
</dbReference>
<dbReference type="SUPFAM" id="SSF54001">
    <property type="entry name" value="Cysteine proteinases"/>
    <property type="match status" value="1"/>
</dbReference>
<dbReference type="SUPFAM" id="SSF144232">
    <property type="entry name" value="HIT/MYND zinc finger-like"/>
    <property type="match status" value="1"/>
</dbReference>
<dbReference type="SUPFAM" id="SSF49764">
    <property type="entry name" value="HSP20-like chaperones"/>
    <property type="match status" value="2"/>
</dbReference>
<dbReference type="PROSITE" id="PS51203">
    <property type="entry name" value="CS"/>
    <property type="match status" value="2"/>
</dbReference>
<dbReference type="PROSITE" id="PS00972">
    <property type="entry name" value="USP_1"/>
    <property type="match status" value="1"/>
</dbReference>
<dbReference type="PROSITE" id="PS00973">
    <property type="entry name" value="USP_2"/>
    <property type="match status" value="1"/>
</dbReference>
<dbReference type="PROSITE" id="PS50235">
    <property type="entry name" value="USP_3"/>
    <property type="match status" value="1"/>
</dbReference>
<dbReference type="PROSITE" id="PS01360">
    <property type="entry name" value="ZF_MYND_1"/>
    <property type="match status" value="1"/>
</dbReference>
<dbReference type="PROSITE" id="PS50865">
    <property type="entry name" value="ZF_MYND_2"/>
    <property type="match status" value="1"/>
</dbReference>
<organism>
    <name type="scientific">Homo sapiens</name>
    <name type="common">Human</name>
    <dbReference type="NCBI Taxonomy" id="9606"/>
    <lineage>
        <taxon>Eukaryota</taxon>
        <taxon>Metazoa</taxon>
        <taxon>Chordata</taxon>
        <taxon>Craniata</taxon>
        <taxon>Vertebrata</taxon>
        <taxon>Euteleostomi</taxon>
        <taxon>Mammalia</taxon>
        <taxon>Eutheria</taxon>
        <taxon>Euarchontoglires</taxon>
        <taxon>Primates</taxon>
        <taxon>Haplorrhini</taxon>
        <taxon>Catarrhini</taxon>
        <taxon>Hominidae</taxon>
        <taxon>Homo</taxon>
    </lineage>
</organism>
<accession>O94966</accession>
<accession>A5PKX8</accession>
<accession>A6H8U2</accession>
<accession>B4DGT3</accession>
<accession>B4DTZ0</accession>
<accession>E7EN22</accession>
<accession>E7ETS0</accession>
<accession>E9PEG8</accession>
<accession>Q3KQW4</accession>
<accession>Q641Q9</accession>
<accession>Q6NZY8</accession>
<accession>Q86XV9</accession>
<protein>
    <recommendedName>
        <fullName>Ubiquitin carboxyl-terminal hydrolase 19</fullName>
        <ecNumber evidence="14 15 17">3.4.19.12</ecNumber>
    </recommendedName>
    <alternativeName>
        <fullName>Deubiquitinating enzyme 19</fullName>
    </alternativeName>
    <alternativeName>
        <fullName>Ubiquitin thioesterase 19</fullName>
    </alternativeName>
    <alternativeName>
        <fullName>Ubiquitin-specific-processing protease 19</fullName>
    </alternativeName>
    <alternativeName>
        <fullName>Zinc finger MYND domain-containing protein 9</fullName>
    </alternativeName>
</protein>
<evidence type="ECO:0000250" key="1"/>
<evidence type="ECO:0000250" key="2">
    <source>
        <dbReference type="UniProtKB" id="Q3UJD6"/>
    </source>
</evidence>
<evidence type="ECO:0000250" key="3">
    <source>
        <dbReference type="UniProtKB" id="Q6J1Y9"/>
    </source>
</evidence>
<evidence type="ECO:0000255" key="4"/>
<evidence type="ECO:0000255" key="5">
    <source>
        <dbReference type="PROSITE-ProRule" id="PRU00134"/>
    </source>
</evidence>
<evidence type="ECO:0000255" key="6">
    <source>
        <dbReference type="PROSITE-ProRule" id="PRU00547"/>
    </source>
</evidence>
<evidence type="ECO:0000255" key="7">
    <source>
        <dbReference type="PROSITE-ProRule" id="PRU10092"/>
    </source>
</evidence>
<evidence type="ECO:0000255" key="8">
    <source>
        <dbReference type="PROSITE-ProRule" id="PRU10093"/>
    </source>
</evidence>
<evidence type="ECO:0000256" key="9">
    <source>
        <dbReference type="SAM" id="MobiDB-lite"/>
    </source>
</evidence>
<evidence type="ECO:0000269" key="10">
    <source>
    </source>
</evidence>
<evidence type="ECO:0000269" key="11">
    <source>
    </source>
</evidence>
<evidence type="ECO:0000269" key="12">
    <source>
    </source>
</evidence>
<evidence type="ECO:0000269" key="13">
    <source>
    </source>
</evidence>
<evidence type="ECO:0000269" key="14">
    <source>
    </source>
</evidence>
<evidence type="ECO:0000269" key="15">
    <source>
    </source>
</evidence>
<evidence type="ECO:0000269" key="16">
    <source>
    </source>
</evidence>
<evidence type="ECO:0000269" key="17">
    <source>
    </source>
</evidence>
<evidence type="ECO:0000269" key="18">
    <source>
    </source>
</evidence>
<evidence type="ECO:0000303" key="19">
    <source>
    </source>
</evidence>
<evidence type="ECO:0000303" key="20">
    <source>
    </source>
</evidence>
<evidence type="ECO:0000305" key="21"/>
<evidence type="ECO:0007744" key="22">
    <source>
        <dbReference type="PDB" id="6K7W"/>
    </source>
</evidence>
<evidence type="ECO:0007744" key="23">
    <source>
        <dbReference type="PDB" id="6KHV"/>
    </source>
</evidence>
<evidence type="ECO:0007744" key="24">
    <source>
        <dbReference type="PDB" id="6KQV"/>
    </source>
</evidence>
<evidence type="ECO:0007744" key="25">
    <source>
    </source>
</evidence>
<evidence type="ECO:0007829" key="26">
    <source>
        <dbReference type="PDB" id="1WH0"/>
    </source>
</evidence>
<evidence type="ECO:0007829" key="27">
    <source>
        <dbReference type="PDB" id="4X3G"/>
    </source>
</evidence>
<evidence type="ECO:0007829" key="28">
    <source>
        <dbReference type="PDB" id="6K7W"/>
    </source>
</evidence>
<evidence type="ECO:0007829" key="29">
    <source>
        <dbReference type="PDB" id="6KHV"/>
    </source>
</evidence>
<evidence type="ECO:0007829" key="30">
    <source>
        <dbReference type="PDB" id="6KQV"/>
    </source>
</evidence>
<reference key="1">
    <citation type="journal article" date="1998" name="DNA Res.">
        <title>Prediction of the coding sequences of unidentified human genes. XII. The complete sequences of 100 new cDNA clones from brain which code for large proteins in vitro.</title>
        <authorList>
            <person name="Nagase T."/>
            <person name="Ishikawa K."/>
            <person name="Suyama M."/>
            <person name="Kikuno R."/>
            <person name="Hirosawa M."/>
            <person name="Miyajima N."/>
            <person name="Tanaka A."/>
            <person name="Kotani H."/>
            <person name="Nomura N."/>
            <person name="Ohara O."/>
        </authorList>
    </citation>
    <scope>NUCLEOTIDE SEQUENCE [LARGE SCALE MRNA] (ISOFORM 1)</scope>
    <source>
        <tissue>Brain</tissue>
    </source>
</reference>
<reference key="2">
    <citation type="journal article" date="2004" name="Nat. Genet.">
        <title>Complete sequencing and characterization of 21,243 full-length human cDNAs.</title>
        <authorList>
            <person name="Ota T."/>
            <person name="Suzuki Y."/>
            <person name="Nishikawa T."/>
            <person name="Otsuki T."/>
            <person name="Sugiyama T."/>
            <person name="Irie R."/>
            <person name="Wakamatsu A."/>
            <person name="Hayashi K."/>
            <person name="Sato H."/>
            <person name="Nagai K."/>
            <person name="Kimura K."/>
            <person name="Makita H."/>
            <person name="Sekine M."/>
            <person name="Obayashi M."/>
            <person name="Nishi T."/>
            <person name="Shibahara T."/>
            <person name="Tanaka T."/>
            <person name="Ishii S."/>
            <person name="Yamamoto J."/>
            <person name="Saito K."/>
            <person name="Kawai Y."/>
            <person name="Isono Y."/>
            <person name="Nakamura Y."/>
            <person name="Nagahari K."/>
            <person name="Murakami K."/>
            <person name="Yasuda T."/>
            <person name="Iwayanagi T."/>
            <person name="Wagatsuma M."/>
            <person name="Shiratori A."/>
            <person name="Sudo H."/>
            <person name="Hosoiri T."/>
            <person name="Kaku Y."/>
            <person name="Kodaira H."/>
            <person name="Kondo H."/>
            <person name="Sugawara M."/>
            <person name="Takahashi M."/>
            <person name="Kanda K."/>
            <person name="Yokoi T."/>
            <person name="Furuya T."/>
            <person name="Kikkawa E."/>
            <person name="Omura Y."/>
            <person name="Abe K."/>
            <person name="Kamihara K."/>
            <person name="Katsuta N."/>
            <person name="Sato K."/>
            <person name="Tanikawa M."/>
            <person name="Yamazaki M."/>
            <person name="Ninomiya K."/>
            <person name="Ishibashi T."/>
            <person name="Yamashita H."/>
            <person name="Murakawa K."/>
            <person name="Fujimori K."/>
            <person name="Tanai H."/>
            <person name="Kimata M."/>
            <person name="Watanabe M."/>
            <person name="Hiraoka S."/>
            <person name="Chiba Y."/>
            <person name="Ishida S."/>
            <person name="Ono Y."/>
            <person name="Takiguchi S."/>
            <person name="Watanabe S."/>
            <person name="Yosida M."/>
            <person name="Hotuta T."/>
            <person name="Kusano J."/>
            <person name="Kanehori K."/>
            <person name="Takahashi-Fujii A."/>
            <person name="Hara H."/>
            <person name="Tanase T.-O."/>
            <person name="Nomura Y."/>
            <person name="Togiya S."/>
            <person name="Komai F."/>
            <person name="Hara R."/>
            <person name="Takeuchi K."/>
            <person name="Arita M."/>
            <person name="Imose N."/>
            <person name="Musashino K."/>
            <person name="Yuuki H."/>
            <person name="Oshima A."/>
            <person name="Sasaki N."/>
            <person name="Aotsuka S."/>
            <person name="Yoshikawa Y."/>
            <person name="Matsunawa H."/>
            <person name="Ichihara T."/>
            <person name="Shiohata N."/>
            <person name="Sano S."/>
            <person name="Moriya S."/>
            <person name="Momiyama H."/>
            <person name="Satoh N."/>
            <person name="Takami S."/>
            <person name="Terashima Y."/>
            <person name="Suzuki O."/>
            <person name="Nakagawa S."/>
            <person name="Senoh A."/>
            <person name="Mizoguchi H."/>
            <person name="Goto Y."/>
            <person name="Shimizu F."/>
            <person name="Wakebe H."/>
            <person name="Hishigaki H."/>
            <person name="Watanabe T."/>
            <person name="Sugiyama A."/>
            <person name="Takemoto M."/>
            <person name="Kawakami B."/>
            <person name="Yamazaki M."/>
            <person name="Watanabe K."/>
            <person name="Kumagai A."/>
            <person name="Itakura S."/>
            <person name="Fukuzumi Y."/>
            <person name="Fujimori Y."/>
            <person name="Komiyama M."/>
            <person name="Tashiro H."/>
            <person name="Tanigami A."/>
            <person name="Fujiwara T."/>
            <person name="Ono T."/>
            <person name="Yamada K."/>
            <person name="Fujii Y."/>
            <person name="Ozaki K."/>
            <person name="Hirao M."/>
            <person name="Ohmori Y."/>
            <person name="Kawabata A."/>
            <person name="Hikiji T."/>
            <person name="Kobatake N."/>
            <person name="Inagaki H."/>
            <person name="Ikema Y."/>
            <person name="Okamoto S."/>
            <person name="Okitani R."/>
            <person name="Kawakami T."/>
            <person name="Noguchi S."/>
            <person name="Itoh T."/>
            <person name="Shigeta K."/>
            <person name="Senba T."/>
            <person name="Matsumura K."/>
            <person name="Nakajima Y."/>
            <person name="Mizuno T."/>
            <person name="Morinaga M."/>
            <person name="Sasaki M."/>
            <person name="Togashi T."/>
            <person name="Oyama M."/>
            <person name="Hata H."/>
            <person name="Watanabe M."/>
            <person name="Komatsu T."/>
            <person name="Mizushima-Sugano J."/>
            <person name="Satoh T."/>
            <person name="Shirai Y."/>
            <person name="Takahashi Y."/>
            <person name="Nakagawa K."/>
            <person name="Okumura K."/>
            <person name="Nagase T."/>
            <person name="Nomura N."/>
            <person name="Kikuchi H."/>
            <person name="Masuho Y."/>
            <person name="Yamashita R."/>
            <person name="Nakai K."/>
            <person name="Yada T."/>
            <person name="Nakamura Y."/>
            <person name="Ohara O."/>
            <person name="Isogai T."/>
            <person name="Sugano S."/>
        </authorList>
    </citation>
    <scope>NUCLEOTIDE SEQUENCE [LARGE SCALE MRNA] (ISOFORMS 5 AND 7)</scope>
    <source>
        <tissue>Brain</tissue>
    </source>
</reference>
<reference key="3">
    <citation type="journal article" date="2006" name="Nature">
        <title>The DNA sequence, annotation and analysis of human chromosome 3.</title>
        <authorList>
            <person name="Muzny D.M."/>
            <person name="Scherer S.E."/>
            <person name="Kaul R."/>
            <person name="Wang J."/>
            <person name="Yu J."/>
            <person name="Sudbrak R."/>
            <person name="Buhay C.J."/>
            <person name="Chen R."/>
            <person name="Cree A."/>
            <person name="Ding Y."/>
            <person name="Dugan-Rocha S."/>
            <person name="Gill R."/>
            <person name="Gunaratne P."/>
            <person name="Harris R.A."/>
            <person name="Hawes A.C."/>
            <person name="Hernandez J."/>
            <person name="Hodgson A.V."/>
            <person name="Hume J."/>
            <person name="Jackson A."/>
            <person name="Khan Z.M."/>
            <person name="Kovar-Smith C."/>
            <person name="Lewis L.R."/>
            <person name="Lozado R.J."/>
            <person name="Metzker M.L."/>
            <person name="Milosavljevic A."/>
            <person name="Miner G.R."/>
            <person name="Morgan M.B."/>
            <person name="Nazareth L.V."/>
            <person name="Scott G."/>
            <person name="Sodergren E."/>
            <person name="Song X.-Z."/>
            <person name="Steffen D."/>
            <person name="Wei S."/>
            <person name="Wheeler D.A."/>
            <person name="Wright M.W."/>
            <person name="Worley K.C."/>
            <person name="Yuan Y."/>
            <person name="Zhang Z."/>
            <person name="Adams C.Q."/>
            <person name="Ansari-Lari M.A."/>
            <person name="Ayele M."/>
            <person name="Brown M.J."/>
            <person name="Chen G."/>
            <person name="Chen Z."/>
            <person name="Clendenning J."/>
            <person name="Clerc-Blankenburg K.P."/>
            <person name="Chen R."/>
            <person name="Chen Z."/>
            <person name="Davis C."/>
            <person name="Delgado O."/>
            <person name="Dinh H.H."/>
            <person name="Dong W."/>
            <person name="Draper H."/>
            <person name="Ernst S."/>
            <person name="Fu G."/>
            <person name="Gonzalez-Garay M.L."/>
            <person name="Garcia D.K."/>
            <person name="Gillett W."/>
            <person name="Gu J."/>
            <person name="Hao B."/>
            <person name="Haugen E."/>
            <person name="Havlak P."/>
            <person name="He X."/>
            <person name="Hennig S."/>
            <person name="Hu S."/>
            <person name="Huang W."/>
            <person name="Jackson L.R."/>
            <person name="Jacob L.S."/>
            <person name="Kelly S.H."/>
            <person name="Kube M."/>
            <person name="Levy R."/>
            <person name="Li Z."/>
            <person name="Liu B."/>
            <person name="Liu J."/>
            <person name="Liu W."/>
            <person name="Lu J."/>
            <person name="Maheshwari M."/>
            <person name="Nguyen B.-V."/>
            <person name="Okwuonu G.O."/>
            <person name="Palmeiri A."/>
            <person name="Pasternak S."/>
            <person name="Perez L.M."/>
            <person name="Phelps K.A."/>
            <person name="Plopper F.J."/>
            <person name="Qiang B."/>
            <person name="Raymond C."/>
            <person name="Rodriguez R."/>
            <person name="Saenphimmachak C."/>
            <person name="Santibanez J."/>
            <person name="Shen H."/>
            <person name="Shen Y."/>
            <person name="Subramanian S."/>
            <person name="Tabor P.E."/>
            <person name="Verduzco D."/>
            <person name="Waldron L."/>
            <person name="Wang J."/>
            <person name="Wang J."/>
            <person name="Wang Q."/>
            <person name="Williams G.A."/>
            <person name="Wong G.K.-S."/>
            <person name="Yao Z."/>
            <person name="Zhang J."/>
            <person name="Zhang X."/>
            <person name="Zhao G."/>
            <person name="Zhou J."/>
            <person name="Zhou Y."/>
            <person name="Nelson D."/>
            <person name="Lehrach H."/>
            <person name="Reinhardt R."/>
            <person name="Naylor S.L."/>
            <person name="Yang H."/>
            <person name="Olson M."/>
            <person name="Weinstock G."/>
            <person name="Gibbs R.A."/>
        </authorList>
    </citation>
    <scope>NUCLEOTIDE SEQUENCE [LARGE SCALE GENOMIC DNA]</scope>
</reference>
<reference key="4">
    <citation type="journal article" date="2004" name="Genome Res.">
        <title>The status, quality, and expansion of the NIH full-length cDNA project: the Mammalian Gene Collection (MGC).</title>
        <authorList>
            <consortium name="The MGC Project Team"/>
        </authorList>
    </citation>
    <scope>NUCLEOTIDE SEQUENCE [LARGE SCALE MRNA] (ISOFORMS 1; 2 AND 6)</scope>
    <scope>NUCLEOTIDE SEQUENCE [LARGE SCALE MRNA] OF 846-1318 (ISOFORM 3)</scope>
    <scope>NUCLEOTIDE SEQUENCE [LARGE SCALE MRNA] OF 90-1318 (ISOFORM 4)</scope>
    <source>
        <tissue>Skin</tissue>
        <tissue>Testis</tissue>
    </source>
</reference>
<reference key="5">
    <citation type="journal article" date="2008" name="Proc. Natl. Acad. Sci. U.S.A.">
        <title>A quantitative atlas of mitotic phosphorylation.</title>
        <authorList>
            <person name="Dephoure N."/>
            <person name="Zhou C."/>
            <person name="Villen J."/>
            <person name="Beausoleil S.A."/>
            <person name="Bakalarski C.E."/>
            <person name="Elledge S.J."/>
            <person name="Gygi S.P."/>
        </authorList>
    </citation>
    <scope>IDENTIFICATION BY MASS SPECTROMETRY [LARGE SCALE ANALYSIS]</scope>
    <source>
        <tissue>Cervix carcinoma</tissue>
    </source>
</reference>
<reference key="6">
    <citation type="journal article" date="2009" name="EMBO Rep.">
        <title>The ER-resident ubiquitin-specific protease 19 participates in the UPR and rescues ERAD substrates.</title>
        <authorList>
            <person name="Hassink G.C."/>
            <person name="Zhao B."/>
            <person name="Sompallae R."/>
            <person name="Altun M."/>
            <person name="Gastaldello S."/>
            <person name="Zinin N.V."/>
            <person name="Masucci M.G."/>
            <person name="Lindsten K."/>
        </authorList>
    </citation>
    <scope>FUNCTION</scope>
    <scope>TOPOLOGY</scope>
    <scope>SUBCELLULAR LOCATION</scope>
</reference>
<reference key="7">
    <citation type="journal article" date="2010" name="Sci. Signal.">
        <title>Quantitative phosphoproteomics reveals widespread full phosphorylation site occupancy during mitosis.</title>
        <authorList>
            <person name="Olsen J.V."/>
            <person name="Vermeulen M."/>
            <person name="Santamaria A."/>
            <person name="Kumar C."/>
            <person name="Miller M.L."/>
            <person name="Jensen L.J."/>
            <person name="Gnad F."/>
            <person name="Cox J."/>
            <person name="Jensen T.S."/>
            <person name="Nigg E.A."/>
            <person name="Brunak S."/>
            <person name="Mann M."/>
        </authorList>
    </citation>
    <scope>IDENTIFICATION BY MASS SPECTROMETRY [LARGE SCALE ANALYSIS]</scope>
    <source>
        <tissue>Cervix carcinoma</tissue>
    </source>
</reference>
<reference key="8">
    <citation type="journal article" date="2011" name="BMC Syst. Biol.">
        <title>Initial characterization of the human central proteome.</title>
        <authorList>
            <person name="Burkard T.R."/>
            <person name="Planyavsky M."/>
            <person name="Kaupe I."/>
            <person name="Breitwieser F.P."/>
            <person name="Buerckstuemmer T."/>
            <person name="Bennett K.L."/>
            <person name="Superti-Furga G."/>
            <person name="Colinge J."/>
        </authorList>
    </citation>
    <scope>IDENTIFICATION BY MASS SPECTROMETRY [LARGE SCALE ANALYSIS]</scope>
</reference>
<reference key="9">
    <citation type="journal article" date="2011" name="J. Biol. Chem.">
        <title>The USP19 deubiquitinase regulates the stability of c-IAP1 and c-IAP2.</title>
        <authorList>
            <person name="Mei Y."/>
            <person name="Hahn A.A."/>
            <person name="Hu S."/>
            <person name="Yang X."/>
        </authorList>
    </citation>
    <scope>FUNCTION</scope>
    <scope>INTERACTION WITH BIRC2/C-IAP1; BIRC3/C-IAP2 AND XIAP/BIRC4</scope>
</reference>
<reference key="10">
    <citation type="journal article" date="2012" name="ChemBioChem">
        <title>Profiling ubiquitin linkage specificities of deubiquitinating enzymes with branched ubiquitin isopeptide probes.</title>
        <authorList>
            <person name="Iphofer A."/>
            <person name="Kummer A."/>
            <person name="Nimtz M."/>
            <person name="Ritter A."/>
            <person name="Arnold T."/>
            <person name="Frank R."/>
            <person name="van den Heuvel J."/>
            <person name="Kessler B.M."/>
            <person name="Jansch L."/>
            <person name="Franke R."/>
        </authorList>
    </citation>
    <scope>FUNCTION</scope>
    <scope>LINKAGE SPECIFICITY</scope>
</reference>
<reference key="11">
    <citation type="journal article" date="2012" name="J. Biol. Chem.">
        <title>Ubiquitin-specific protease 19 (USP19) regulates hypoxia-inducible factor 1alpha (HIF-1alpha) during hypoxia.</title>
        <authorList>
            <person name="Altun M."/>
            <person name="Zhao B."/>
            <person name="Velasco K."/>
            <person name="Liu H."/>
            <person name="Hassink G."/>
            <person name="Paschke J."/>
            <person name="Pereira T."/>
            <person name="Lindsten K."/>
        </authorList>
    </citation>
    <scope>FUNCTION</scope>
    <scope>INTERACTION WITH HIF1A</scope>
</reference>
<reference key="12">
    <citation type="journal article" date="2013" name="J. Proteome Res.">
        <title>Toward a comprehensive characterization of a human cancer cell phosphoproteome.</title>
        <authorList>
            <person name="Zhou H."/>
            <person name="Di Palma S."/>
            <person name="Preisinger C."/>
            <person name="Peng M."/>
            <person name="Polat A.N."/>
            <person name="Heck A.J."/>
            <person name="Mohammed S."/>
        </authorList>
    </citation>
    <scope>PHOSPHORYLATION [LARGE SCALE ANALYSIS] AT SER-244</scope>
    <scope>IDENTIFICATION BY MASS SPECTROMETRY [LARGE SCALE ANALYSIS]</scope>
    <source>
        <tissue>Cervix carcinoma</tissue>
        <tissue>Erythroleukemia</tissue>
    </source>
</reference>
<reference key="13">
    <citation type="journal article" date="2014" name="J. Biol. Chem.">
        <title>Characterization of the deubiquitinating activity of USP19 and its role in endoplasmic reticulum-associated degradation.</title>
        <authorList>
            <person name="Lee J.G."/>
            <person name="Kim W."/>
            <person name="Gygi S."/>
            <person name="Ye Y."/>
        </authorList>
    </citation>
    <scope>FUNCTION</scope>
    <scope>CATALYTIC ACTIVITY</scope>
</reference>
<reference key="14">
    <citation type="journal article" date="2019" name="J. Immunol.">
        <title>USP19 Inhibits TNF-alpha- and IL-1beta-Triggered NF-kappaB Activation by Deubiquitinating TAK1.</title>
        <authorList>
            <person name="Lei C.Q."/>
            <person name="Wu X."/>
            <person name="Zhong X."/>
            <person name="Jiang L."/>
            <person name="Zhong B."/>
            <person name="Shu H.B."/>
        </authorList>
    </citation>
    <scope>FUNCTION</scope>
    <scope>CATALYTIC ACTIVITY</scope>
</reference>
<reference key="15">
    <citation type="journal article" date="2021" name="J. Cell Biol.">
        <title>USP19 promotes hypoxia-induced mitochondrial division via FUNDC1 at ER-mitochondria contact sites.</title>
        <authorList>
            <person name="Chai P."/>
            <person name="Cheng Y."/>
            <person name="Hou C."/>
            <person name="Yin L."/>
            <person name="Zhang D."/>
            <person name="Hu Y."/>
            <person name="Chen Q."/>
            <person name="Zheng P."/>
            <person name="Teng J."/>
            <person name="Chen J."/>
        </authorList>
    </citation>
    <scope>FUNCTION</scope>
    <scope>SUBCELLULAR LOCATION</scope>
    <scope>CATALYTIC ACTIVITY</scope>
</reference>
<reference key="16">
    <citation type="journal article" date="2024" name="J. Alzheimers Dis.">
        <title>Deubiquitinating Enzyme USP19 Regulates Ferroptosis and Mitochondrial Damage in SH-SY5Y Cells by Targeting the NOX4 Protein.</title>
        <authorList>
            <person name="Yu W."/>
            <person name="Zhuang S."/>
            <person name="Zhan M."/>
            <person name="Chen Y."/>
            <person name="Zhang J."/>
            <person name="Chen L."/>
            <person name="Tu C."/>
            <person name="Zheng L."/>
            <person name="Chen S."/>
        </authorList>
    </citation>
    <scope>FUNCTION</scope>
</reference>
<reference key="17">
    <citation type="submission" date="2004-11" db="PDB data bank">
        <title>Solution structure of the CS domain of human USP19.</title>
        <authorList>
            <consortium name="RIKEN structural genomics initiative (RSGI)"/>
        </authorList>
    </citation>
    <scope>STRUCTURE BY NMR OF 273-393</scope>
</reference>
<reference evidence="22 23 24" key="18">
    <citation type="journal article" date="2020" name="Biochem. J.">
        <title>Domain interactions reveal auto-inhibition of the deubiquitinating enzyme USP19 and its activation by HSP90 in the modulation of huntingtin aggregation.</title>
        <authorList>
            <person name="Xue W."/>
            <person name="Zhang S.X."/>
            <person name="He W.T."/>
            <person name="Hong J.Y."/>
            <person name="Jiang L.L."/>
            <person name="Hu H.Y."/>
        </authorList>
    </citation>
    <scope>STRUCTURE BY NMR OF 273-386</scope>
    <scope>INTERACTION WITH HSP90AA1</scope>
    <scope>DOMAIN</scope>
    <scope>FUNCTION</scope>
</reference>
<keyword id="KW-0002">3D-structure</keyword>
<keyword id="KW-0025">Alternative splicing</keyword>
<keyword id="KW-0256">Endoplasmic reticulum</keyword>
<keyword id="KW-0378">Hydrolase</keyword>
<keyword id="KW-0472">Membrane</keyword>
<keyword id="KW-0479">Metal-binding</keyword>
<keyword id="KW-0597">Phosphoprotein</keyword>
<keyword id="KW-0645">Protease</keyword>
<keyword id="KW-1267">Proteomics identification</keyword>
<keyword id="KW-1185">Reference proteome</keyword>
<keyword id="KW-0677">Repeat</keyword>
<keyword id="KW-0788">Thiol protease</keyword>
<keyword id="KW-0812">Transmembrane</keyword>
<keyword id="KW-1133">Transmembrane helix</keyword>
<keyword id="KW-0833">Ubl conjugation pathway</keyword>
<keyword id="KW-0862">Zinc</keyword>
<keyword id="KW-0863">Zinc-finger</keyword>
<name>UBP19_HUMAN</name>
<sequence length="1318" mass="145651">MSGGASATGPRRGPPGLEDTTSKKKQKDRANQESKDGDPRKETGSRYVAQAGLEPLASGDPSASASHAAGITGSRHRTRLFFPSSSGSASTPQEEQTKEGACEDPHDLLATPTPELLLDWRQSAEEVIVKLRVGVGPLQLEDVDAAFTDTDCVVRFAGGQQWGGVFYAEIKSSCAKVQTRKGSLLHLTLPKKVPMLTWPSLLVEADEQLCIPPLNSQTCLLGSEENLAPLAGEKAVPPGNDPVSPAMVRSRNPGKDDCAKEEMAVAADAATLVDEPESMVNLAFVKNDSYEKGPDSVVVHVYVKEICRDTSRVLFREQDFTLIFQTRDGNFLRLHPGCGPHTTFRWQVKLRNLIEPEQCTFCFTASRIDICLRKRQSQRWGGLEAPAARVGGAKVAVPTGPTPLDSTPPGGAPHPLTGQEEARAVEKDKSKARSEDTGLDSVATRTPMEHVTPKPETHLASPKPTCMVPPMPHSPVSGDSVEEEEEEEKKVCLPGFTGLVNLGNTCFMNSVIQSLSNTRELRDFFHDRSFEAEINYNNPLGTGGRLAIGFAVLLRALWKGTHHAFQPSKLKAIVASKASQFTGYAQHDAQEFMAFLLDGLHEDLNRIQNKPYTETVDSDGRPDEVVAEEAWQRHKMRNDSFIVDLFQGQYKSKLVCPVCAKVSITFDPFLYLPVPLPQKQKVLPVFYFAREPHSKPIKFLVSVSKENSTASEVLDSLSQSVHVKPENLRLAEVIKNRFHRVFLPSHSLDTVSPSDTLLCFELLSSELAKERVVVLEVQQRPQVPSVPISKCAACQRKQQSEDEKLKRCTRCYRVGYCNQLCQKTHWPDHKGLCRPENIGYPFLVSVPASRLTYARLAQLLEGYARYSVSVFQPPFQPGRMALESQSPGCTTLLSTGSLEAGDSERDPIQPPELQLVTPMAEGDTGLPRVWAAPDRGPVPSTSGISSEMLASGPIEVGSLPAGERVSRPEAAVPGYQHPSEAMNAHTPQFFIYKIDSSNREQRLEDKGDTPLELGDDCSLALVWRNNERLQEFVLVASKELECAEDPGSAGEAARAGHFTLDQCLNLFTRPEVLAPEEAWYCPQCKQHREASKQLLLWRLPNVLIVQLKRFSFRSFIWRDKINDLVEFPVRNLDLSKFCIGQKEEQLPSYDLYAVINHYGGMIGGHYTACARLPNDRSSQRSDVGWRLFDDSTVTTVDESQVVTRYAYVLFYRRRNSPVERPPRAGHSEHHPDLGPAAEAAASQASRIWQELEAEEEPVPEGSGPLGPWGPQDWVGPLPRGPTTPDEGCLRYFVLGTVAALVALVLNVFYPLVSQSRWR</sequence>
<feature type="chain" id="PRO_0000080646" description="Ubiquitin carboxyl-terminal hydrolase 19">
    <location>
        <begin position="1"/>
        <end position="1318"/>
    </location>
</feature>
<feature type="topological domain" description="Cytoplasmic" evidence="4">
    <location>
        <begin position="1"/>
        <end position="1291"/>
    </location>
</feature>
<feature type="transmembrane region" description="Helical" evidence="4">
    <location>
        <begin position="1292"/>
        <end position="1312"/>
    </location>
</feature>
<feature type="topological domain" description="Lumenal" evidence="4">
    <location>
        <begin position="1313"/>
        <end position="1318"/>
    </location>
</feature>
<feature type="domain" description="CS 1" evidence="6">
    <location>
        <begin position="113"/>
        <end position="202"/>
    </location>
</feature>
<feature type="domain" description="CS 2" evidence="6">
    <location>
        <begin position="282"/>
        <end position="384"/>
    </location>
</feature>
<feature type="domain" description="USP">
    <location>
        <begin position="497"/>
        <end position="1214"/>
    </location>
</feature>
<feature type="zinc finger region" description="MYND-type" evidence="5">
    <location>
        <begin position="791"/>
        <end position="833"/>
    </location>
</feature>
<feature type="region of interest" description="Disordered" evidence="9">
    <location>
        <begin position="1"/>
        <end position="109"/>
    </location>
</feature>
<feature type="region of interest" description="Disordered" evidence="9">
    <location>
        <begin position="234"/>
        <end position="255"/>
    </location>
</feature>
<feature type="region of interest" description="Disordered" evidence="9">
    <location>
        <begin position="390"/>
        <end position="479"/>
    </location>
</feature>
<feature type="region of interest" description="Disordered" evidence="9">
    <location>
        <begin position="1218"/>
        <end position="1239"/>
    </location>
</feature>
<feature type="compositionally biased region" description="Basic and acidic residues" evidence="9">
    <location>
        <begin position="28"/>
        <end position="44"/>
    </location>
</feature>
<feature type="compositionally biased region" description="Polar residues" evidence="9">
    <location>
        <begin position="83"/>
        <end position="94"/>
    </location>
</feature>
<feature type="compositionally biased region" description="Basic and acidic residues" evidence="9">
    <location>
        <begin position="95"/>
        <end position="107"/>
    </location>
</feature>
<feature type="compositionally biased region" description="Basic and acidic residues" evidence="9">
    <location>
        <begin position="420"/>
        <end position="436"/>
    </location>
</feature>
<feature type="compositionally biased region" description="Basic and acidic residues" evidence="9">
    <location>
        <begin position="447"/>
        <end position="457"/>
    </location>
</feature>
<feature type="compositionally biased region" description="Basic and acidic residues" evidence="9">
    <location>
        <begin position="1218"/>
        <end position="1232"/>
    </location>
</feature>
<feature type="active site" description="Nucleophile" evidence="7 8">
    <location>
        <position position="506"/>
    </location>
</feature>
<feature type="active site" description="Proton acceptor" evidence="7 8">
    <location>
        <position position="1165"/>
    </location>
</feature>
<feature type="binding site" evidence="5">
    <location>
        <position position="791"/>
    </location>
    <ligand>
        <name>Zn(2+)</name>
        <dbReference type="ChEBI" id="CHEBI:29105"/>
        <label>1</label>
    </ligand>
</feature>
<feature type="binding site" evidence="5">
    <location>
        <position position="794"/>
    </location>
    <ligand>
        <name>Zn(2+)</name>
        <dbReference type="ChEBI" id="CHEBI:29105"/>
        <label>1</label>
    </ligand>
</feature>
<feature type="binding site" evidence="5">
    <location>
        <position position="808"/>
    </location>
    <ligand>
        <name>Zn(2+)</name>
        <dbReference type="ChEBI" id="CHEBI:29105"/>
        <label>2</label>
    </ligand>
</feature>
<feature type="binding site" evidence="5">
    <location>
        <position position="811"/>
    </location>
    <ligand>
        <name>Zn(2+)</name>
        <dbReference type="ChEBI" id="CHEBI:29105"/>
        <label>2</label>
    </ligand>
</feature>
<feature type="binding site" evidence="5">
    <location>
        <position position="817"/>
    </location>
    <ligand>
        <name>Zn(2+)</name>
        <dbReference type="ChEBI" id="CHEBI:29105"/>
        <label>1</label>
    </ligand>
</feature>
<feature type="binding site" evidence="5">
    <location>
        <position position="821"/>
    </location>
    <ligand>
        <name>Zn(2+)</name>
        <dbReference type="ChEBI" id="CHEBI:29105"/>
        <label>1</label>
    </ligand>
</feature>
<feature type="binding site" evidence="5">
    <location>
        <position position="829"/>
    </location>
    <ligand>
        <name>Zn(2+)</name>
        <dbReference type="ChEBI" id="CHEBI:29105"/>
        <label>2</label>
    </ligand>
</feature>
<feature type="binding site" evidence="5">
    <location>
        <position position="833"/>
    </location>
    <ligand>
        <name>Zn(2+)</name>
        <dbReference type="ChEBI" id="CHEBI:29105"/>
        <label>2</label>
    </ligand>
</feature>
<feature type="modified residue" description="Phosphoserine" evidence="25">
    <location>
        <position position="244"/>
    </location>
</feature>
<feature type="splice variant" id="VSP_026708" description="In isoform 2 and isoform 4." evidence="20">
    <location>
        <begin position="100"/>
        <end position="114"/>
    </location>
</feature>
<feature type="splice variant" id="VSP_047057" description="In isoform 7." evidence="19">
    <original>VPMLTWPSLL</original>
    <variation>KKPLGTQELVPGLRCQENGQELSPIALEPGPEPHRAKQEARNQKRAQGRGEVGAGAGPGAQAGPSAKRAVHLCRGPEGDGSRDDPGPRGDAPPFVADPATQ</variation>
    <location>
        <begin position="193"/>
        <end position="202"/>
    </location>
</feature>
<feature type="splice variant" id="VSP_026709" description="In isoform 2, isoform 5 and isoform 6." evidence="19 20">
    <original>L</original>
    <variation>LKKPLGTQELVPGLRCQENGQELSPIALEPGPEPHRAKQEARNQKRAQGRGEVGAGAGPGAQAGPSAKRAVHLCRGPEGDGSRDDPGPRGDAPPFVADPATQ</variation>
    <location>
        <position position="202"/>
    </location>
</feature>
<feature type="splice variant" id="VSP_045891" description="In isoform 4 and isoform 6." evidence="20">
    <original>R</original>
    <variation>RGA</variation>
    <location>
        <position position="389"/>
    </location>
</feature>
<feature type="splice variant" id="VSP_026710" description="In isoform 2." evidence="20">
    <original>IV</original>
    <variation>RL</variation>
    <location>
        <begin position="573"/>
        <end position="574"/>
    </location>
</feature>
<feature type="splice variant" id="VSP_026711" description="In isoform 2." evidence="20">
    <location>
        <begin position="575"/>
        <end position="1318"/>
    </location>
</feature>
<feature type="splice variant" id="VSP_026712" description="In isoform 3, isoform 4, isoform 6 and isoform 7." evidence="19 20">
    <original>ASRIWQELEAEEEPVPEGSGPLGPWGPQDWVGPLPRGPTTPDEGCLRYFVLGTVA</original>
    <variation>GLGPGQAPEVAPTRTAPERFAPPVDRPAPTYSNMEEVD</variation>
    <location>
        <begin position="1244"/>
        <end position="1298"/>
    </location>
</feature>
<feature type="splice variant" id="VSP_026713" description="In isoform 3, isoform 4, isoform 6 and isoform 7." evidence="19 20">
    <location>
        <begin position="1299"/>
        <end position="1318"/>
    </location>
</feature>
<feature type="sequence variant" id="VAR_051528" description="In dbSNP:rs11552724.">
    <original>D</original>
    <variation>H</variation>
    <location>
        <position position="36"/>
    </location>
</feature>
<feature type="sequence conflict" description="In Ref. 2; BAG57894." evidence="21" ref="2">
    <original>S</original>
    <variation>C</variation>
    <location>
        <position position="942"/>
    </location>
</feature>
<feature type="sequence conflict" description="In Ref. 2; BAG62152." evidence="21" ref="2">
    <original>E</original>
    <variation>G</variation>
    <location>
        <position position="1041"/>
    </location>
</feature>
<feature type="strand" evidence="28">
    <location>
        <begin position="115"/>
        <end position="117"/>
    </location>
</feature>
<feature type="strand" evidence="28">
    <location>
        <begin position="119"/>
        <end position="122"/>
    </location>
</feature>
<feature type="strand" evidence="28">
    <location>
        <begin position="124"/>
        <end position="131"/>
    </location>
</feature>
<feature type="strand" evidence="28">
    <location>
        <begin position="135"/>
        <end position="137"/>
    </location>
</feature>
<feature type="helix" evidence="28">
    <location>
        <begin position="140"/>
        <end position="142"/>
    </location>
</feature>
<feature type="strand" evidence="28">
    <location>
        <begin position="146"/>
        <end position="148"/>
    </location>
</feature>
<feature type="strand" evidence="28">
    <location>
        <begin position="151"/>
        <end position="154"/>
    </location>
</feature>
<feature type="strand" evidence="28">
    <location>
        <begin position="156"/>
        <end position="159"/>
    </location>
</feature>
<feature type="strand" evidence="28">
    <location>
        <begin position="162"/>
        <end position="165"/>
    </location>
</feature>
<feature type="strand" evidence="28">
    <location>
        <begin position="177"/>
        <end position="179"/>
    </location>
</feature>
<feature type="strand" evidence="28">
    <location>
        <begin position="181"/>
        <end position="183"/>
    </location>
</feature>
<feature type="strand" evidence="28">
    <location>
        <begin position="185"/>
        <end position="190"/>
    </location>
</feature>
<feature type="strand" evidence="28">
    <location>
        <begin position="199"/>
        <end position="202"/>
    </location>
</feature>
<feature type="helix" evidence="26">
    <location>
        <begin position="276"/>
        <end position="278"/>
    </location>
</feature>
<feature type="strand" evidence="26">
    <location>
        <begin position="279"/>
        <end position="283"/>
    </location>
</feature>
<feature type="strand" evidence="26">
    <location>
        <begin position="287"/>
        <end position="292"/>
    </location>
</feature>
<feature type="turn" evidence="26">
    <location>
        <begin position="293"/>
        <end position="295"/>
    </location>
</feature>
<feature type="strand" evidence="26">
    <location>
        <begin position="296"/>
        <end position="302"/>
    </location>
</feature>
<feature type="turn" evidence="29">
    <location>
        <begin position="308"/>
        <end position="310"/>
    </location>
</feature>
<feature type="strand" evidence="26">
    <location>
        <begin position="312"/>
        <end position="315"/>
    </location>
</feature>
<feature type="strand" evidence="26">
    <location>
        <begin position="317"/>
        <end position="324"/>
    </location>
</feature>
<feature type="helix" evidence="26">
    <location>
        <begin position="329"/>
        <end position="334"/>
    </location>
</feature>
<feature type="turn" evidence="29">
    <location>
        <begin position="336"/>
        <end position="341"/>
    </location>
</feature>
<feature type="strand" evidence="26">
    <location>
        <begin position="344"/>
        <end position="352"/>
    </location>
</feature>
<feature type="turn" evidence="26">
    <location>
        <begin position="356"/>
        <end position="358"/>
    </location>
</feature>
<feature type="strand" evidence="26">
    <location>
        <begin position="360"/>
        <end position="363"/>
    </location>
</feature>
<feature type="strand" evidence="26">
    <location>
        <begin position="365"/>
        <end position="377"/>
    </location>
</feature>
<feature type="strand" evidence="27">
    <location>
        <begin position="465"/>
        <end position="468"/>
    </location>
</feature>
<feature type="strand" evidence="30">
    <location>
        <begin position="682"/>
        <end position="687"/>
    </location>
</feature>
<feature type="strand" evidence="30">
    <location>
        <begin position="691"/>
        <end position="693"/>
    </location>
</feature>
<feature type="strand" evidence="30">
    <location>
        <begin position="697"/>
        <end position="702"/>
    </location>
</feature>
<feature type="helix" evidence="30">
    <location>
        <begin position="711"/>
        <end position="720"/>
    </location>
</feature>
<feature type="helix" evidence="30">
    <location>
        <begin position="725"/>
        <end position="727"/>
    </location>
</feature>
<feature type="strand" evidence="30">
    <location>
        <begin position="731"/>
        <end position="733"/>
    </location>
</feature>
<feature type="strand" evidence="30">
    <location>
        <begin position="735"/>
        <end position="737"/>
    </location>
</feature>
<feature type="sequence conflict" description="In Ref. 4; AAH82241." evidence="21" ref="4">
    <original>A</original>
    <variation>T</variation>
    <location sequence="O94966-4">
        <position position="1251"/>
    </location>
</feature>